<evidence type="ECO:0000255" key="1">
    <source>
        <dbReference type="HAMAP-Rule" id="MF_00184"/>
    </source>
</evidence>
<evidence type="ECO:0000255" key="2">
    <source>
        <dbReference type="PROSITE-ProRule" id="PRU01228"/>
    </source>
</evidence>
<name>SYT_SPHAL</name>
<proteinExistence type="inferred from homology"/>
<comment type="function">
    <text evidence="1">Catalyzes the attachment of threonine to tRNA(Thr) in a two-step reaction: L-threonine is first activated by ATP to form Thr-AMP and then transferred to the acceptor end of tRNA(Thr). Also edits incorrectly charged L-seryl-tRNA(Thr).</text>
</comment>
<comment type="catalytic activity">
    <reaction evidence="1">
        <text>tRNA(Thr) + L-threonine + ATP = L-threonyl-tRNA(Thr) + AMP + diphosphate + H(+)</text>
        <dbReference type="Rhea" id="RHEA:24624"/>
        <dbReference type="Rhea" id="RHEA-COMP:9670"/>
        <dbReference type="Rhea" id="RHEA-COMP:9704"/>
        <dbReference type="ChEBI" id="CHEBI:15378"/>
        <dbReference type="ChEBI" id="CHEBI:30616"/>
        <dbReference type="ChEBI" id="CHEBI:33019"/>
        <dbReference type="ChEBI" id="CHEBI:57926"/>
        <dbReference type="ChEBI" id="CHEBI:78442"/>
        <dbReference type="ChEBI" id="CHEBI:78534"/>
        <dbReference type="ChEBI" id="CHEBI:456215"/>
        <dbReference type="EC" id="6.1.1.3"/>
    </reaction>
</comment>
<comment type="cofactor">
    <cofactor evidence="1">
        <name>Zn(2+)</name>
        <dbReference type="ChEBI" id="CHEBI:29105"/>
    </cofactor>
    <text evidence="1">Binds 1 zinc ion per subunit.</text>
</comment>
<comment type="subunit">
    <text evidence="1">Homodimer.</text>
</comment>
<comment type="subcellular location">
    <subcellularLocation>
        <location evidence="1">Cytoplasm</location>
    </subcellularLocation>
</comment>
<comment type="similarity">
    <text evidence="1">Belongs to the class-II aminoacyl-tRNA synthetase family.</text>
</comment>
<organism>
    <name type="scientific">Sphingopyxis alaskensis (strain DSM 13593 / LMG 18877 / RB2256)</name>
    <name type="common">Sphingomonas alaskensis</name>
    <dbReference type="NCBI Taxonomy" id="317655"/>
    <lineage>
        <taxon>Bacteria</taxon>
        <taxon>Pseudomonadati</taxon>
        <taxon>Pseudomonadota</taxon>
        <taxon>Alphaproteobacteria</taxon>
        <taxon>Sphingomonadales</taxon>
        <taxon>Sphingomonadaceae</taxon>
        <taxon>Sphingopyxis</taxon>
    </lineage>
</organism>
<keyword id="KW-0030">Aminoacyl-tRNA synthetase</keyword>
<keyword id="KW-0067">ATP-binding</keyword>
<keyword id="KW-0963">Cytoplasm</keyword>
<keyword id="KW-0436">Ligase</keyword>
<keyword id="KW-0479">Metal-binding</keyword>
<keyword id="KW-0547">Nucleotide-binding</keyword>
<keyword id="KW-0648">Protein biosynthesis</keyword>
<keyword id="KW-1185">Reference proteome</keyword>
<keyword id="KW-0694">RNA-binding</keyword>
<keyword id="KW-0820">tRNA-binding</keyword>
<keyword id="KW-0862">Zinc</keyword>
<dbReference type="EC" id="6.1.1.3" evidence="1"/>
<dbReference type="EMBL" id="CP000356">
    <property type="protein sequence ID" value="ABF52413.1"/>
    <property type="molecule type" value="Genomic_DNA"/>
</dbReference>
<dbReference type="RefSeq" id="WP_011541003.1">
    <property type="nucleotide sequence ID" value="NC_008048.1"/>
</dbReference>
<dbReference type="SMR" id="Q1GVA9"/>
<dbReference type="STRING" id="317655.Sala_0692"/>
<dbReference type="KEGG" id="sal:Sala_0692"/>
<dbReference type="eggNOG" id="COG0441">
    <property type="taxonomic scope" value="Bacteria"/>
</dbReference>
<dbReference type="HOGENOM" id="CLU_008554_0_1_5"/>
<dbReference type="OrthoDB" id="9802304at2"/>
<dbReference type="Proteomes" id="UP000006578">
    <property type="component" value="Chromosome"/>
</dbReference>
<dbReference type="GO" id="GO:0005829">
    <property type="term" value="C:cytosol"/>
    <property type="evidence" value="ECO:0007669"/>
    <property type="project" value="TreeGrafter"/>
</dbReference>
<dbReference type="GO" id="GO:0005524">
    <property type="term" value="F:ATP binding"/>
    <property type="evidence" value="ECO:0007669"/>
    <property type="project" value="UniProtKB-UniRule"/>
</dbReference>
<dbReference type="GO" id="GO:0046872">
    <property type="term" value="F:metal ion binding"/>
    <property type="evidence" value="ECO:0007669"/>
    <property type="project" value="UniProtKB-KW"/>
</dbReference>
<dbReference type="GO" id="GO:0004829">
    <property type="term" value="F:threonine-tRNA ligase activity"/>
    <property type="evidence" value="ECO:0007669"/>
    <property type="project" value="UniProtKB-UniRule"/>
</dbReference>
<dbReference type="GO" id="GO:0000049">
    <property type="term" value="F:tRNA binding"/>
    <property type="evidence" value="ECO:0007669"/>
    <property type="project" value="UniProtKB-KW"/>
</dbReference>
<dbReference type="GO" id="GO:0006435">
    <property type="term" value="P:threonyl-tRNA aminoacylation"/>
    <property type="evidence" value="ECO:0007669"/>
    <property type="project" value="UniProtKB-UniRule"/>
</dbReference>
<dbReference type="CDD" id="cd01667">
    <property type="entry name" value="TGS_ThrRS"/>
    <property type="match status" value="1"/>
</dbReference>
<dbReference type="CDD" id="cd00860">
    <property type="entry name" value="ThrRS_anticodon"/>
    <property type="match status" value="1"/>
</dbReference>
<dbReference type="CDD" id="cd00771">
    <property type="entry name" value="ThrRS_core"/>
    <property type="match status" value="1"/>
</dbReference>
<dbReference type="FunFam" id="3.10.20.30:FF:000005">
    <property type="entry name" value="Threonine--tRNA ligase"/>
    <property type="match status" value="1"/>
</dbReference>
<dbReference type="FunFam" id="3.30.930.10:FF:000002">
    <property type="entry name" value="Threonine--tRNA ligase"/>
    <property type="match status" value="1"/>
</dbReference>
<dbReference type="FunFam" id="3.40.50.800:FF:000001">
    <property type="entry name" value="Threonine--tRNA ligase"/>
    <property type="match status" value="1"/>
</dbReference>
<dbReference type="Gene3D" id="3.10.20.30">
    <property type="match status" value="1"/>
</dbReference>
<dbReference type="Gene3D" id="3.30.54.20">
    <property type="match status" value="1"/>
</dbReference>
<dbReference type="Gene3D" id="3.40.50.800">
    <property type="entry name" value="Anticodon-binding domain"/>
    <property type="match status" value="1"/>
</dbReference>
<dbReference type="Gene3D" id="3.30.930.10">
    <property type="entry name" value="Bira Bifunctional Protein, Domain 2"/>
    <property type="match status" value="1"/>
</dbReference>
<dbReference type="Gene3D" id="3.30.980.10">
    <property type="entry name" value="Threonyl-trna Synthetase, Chain A, domain 2"/>
    <property type="match status" value="1"/>
</dbReference>
<dbReference type="HAMAP" id="MF_00184">
    <property type="entry name" value="Thr_tRNA_synth"/>
    <property type="match status" value="1"/>
</dbReference>
<dbReference type="InterPro" id="IPR002314">
    <property type="entry name" value="aa-tRNA-synt_IIb"/>
</dbReference>
<dbReference type="InterPro" id="IPR006195">
    <property type="entry name" value="aa-tRNA-synth_II"/>
</dbReference>
<dbReference type="InterPro" id="IPR045864">
    <property type="entry name" value="aa-tRNA-synth_II/BPL/LPL"/>
</dbReference>
<dbReference type="InterPro" id="IPR004154">
    <property type="entry name" value="Anticodon-bd"/>
</dbReference>
<dbReference type="InterPro" id="IPR036621">
    <property type="entry name" value="Anticodon-bd_dom_sf"/>
</dbReference>
<dbReference type="InterPro" id="IPR012675">
    <property type="entry name" value="Beta-grasp_dom_sf"/>
</dbReference>
<dbReference type="InterPro" id="IPR004095">
    <property type="entry name" value="TGS"/>
</dbReference>
<dbReference type="InterPro" id="IPR012676">
    <property type="entry name" value="TGS-like"/>
</dbReference>
<dbReference type="InterPro" id="IPR002320">
    <property type="entry name" value="Thr-tRNA-ligase_IIa"/>
</dbReference>
<dbReference type="InterPro" id="IPR018163">
    <property type="entry name" value="Thr/Ala-tRNA-synth_IIc_edit"/>
</dbReference>
<dbReference type="InterPro" id="IPR047246">
    <property type="entry name" value="ThrRS_anticodon"/>
</dbReference>
<dbReference type="InterPro" id="IPR033728">
    <property type="entry name" value="ThrRS_core"/>
</dbReference>
<dbReference type="InterPro" id="IPR012947">
    <property type="entry name" value="tRNA_SAD"/>
</dbReference>
<dbReference type="NCBIfam" id="TIGR00418">
    <property type="entry name" value="thrS"/>
    <property type="match status" value="1"/>
</dbReference>
<dbReference type="PANTHER" id="PTHR11451:SF44">
    <property type="entry name" value="THREONINE--TRNA LIGASE, CHLOROPLASTIC_MITOCHONDRIAL 2"/>
    <property type="match status" value="1"/>
</dbReference>
<dbReference type="PANTHER" id="PTHR11451">
    <property type="entry name" value="THREONINE-TRNA LIGASE"/>
    <property type="match status" value="1"/>
</dbReference>
<dbReference type="Pfam" id="PF03129">
    <property type="entry name" value="HGTP_anticodon"/>
    <property type="match status" value="1"/>
</dbReference>
<dbReference type="Pfam" id="PF02824">
    <property type="entry name" value="TGS"/>
    <property type="match status" value="1"/>
</dbReference>
<dbReference type="Pfam" id="PF00587">
    <property type="entry name" value="tRNA-synt_2b"/>
    <property type="match status" value="1"/>
</dbReference>
<dbReference type="Pfam" id="PF07973">
    <property type="entry name" value="tRNA_SAD"/>
    <property type="match status" value="1"/>
</dbReference>
<dbReference type="PRINTS" id="PR01047">
    <property type="entry name" value="TRNASYNTHTHR"/>
</dbReference>
<dbReference type="SMART" id="SM00863">
    <property type="entry name" value="tRNA_SAD"/>
    <property type="match status" value="1"/>
</dbReference>
<dbReference type="SUPFAM" id="SSF52954">
    <property type="entry name" value="Class II aaRS ABD-related"/>
    <property type="match status" value="1"/>
</dbReference>
<dbReference type="SUPFAM" id="SSF55681">
    <property type="entry name" value="Class II aaRS and biotin synthetases"/>
    <property type="match status" value="1"/>
</dbReference>
<dbReference type="SUPFAM" id="SSF81271">
    <property type="entry name" value="TGS-like"/>
    <property type="match status" value="1"/>
</dbReference>
<dbReference type="SUPFAM" id="SSF55186">
    <property type="entry name" value="ThrRS/AlaRS common domain"/>
    <property type="match status" value="1"/>
</dbReference>
<dbReference type="PROSITE" id="PS50862">
    <property type="entry name" value="AA_TRNA_LIGASE_II"/>
    <property type="match status" value="1"/>
</dbReference>
<dbReference type="PROSITE" id="PS51880">
    <property type="entry name" value="TGS"/>
    <property type="match status" value="1"/>
</dbReference>
<gene>
    <name evidence="1" type="primary">thrS</name>
    <name type="ordered locus">Sala_0692</name>
</gene>
<protein>
    <recommendedName>
        <fullName evidence="1">Threonine--tRNA ligase</fullName>
        <ecNumber evidence="1">6.1.1.3</ecNumber>
    </recommendedName>
    <alternativeName>
        <fullName evidence="1">Threonyl-tRNA synthetase</fullName>
        <shortName evidence="1">ThrRS</shortName>
    </alternativeName>
</protein>
<feature type="chain" id="PRO_1000020518" description="Threonine--tRNA ligase">
    <location>
        <begin position="1"/>
        <end position="667"/>
    </location>
</feature>
<feature type="domain" description="TGS" evidence="2">
    <location>
        <begin position="3"/>
        <end position="64"/>
    </location>
</feature>
<feature type="region of interest" description="Catalytic" evidence="1">
    <location>
        <begin position="252"/>
        <end position="561"/>
    </location>
</feature>
<feature type="binding site" evidence="1">
    <location>
        <position position="357"/>
    </location>
    <ligand>
        <name>Zn(2+)</name>
        <dbReference type="ChEBI" id="CHEBI:29105"/>
    </ligand>
</feature>
<feature type="binding site" evidence="1">
    <location>
        <position position="408"/>
    </location>
    <ligand>
        <name>Zn(2+)</name>
        <dbReference type="ChEBI" id="CHEBI:29105"/>
    </ligand>
</feature>
<feature type="binding site" evidence="1">
    <location>
        <position position="538"/>
    </location>
    <ligand>
        <name>Zn(2+)</name>
        <dbReference type="ChEBI" id="CHEBI:29105"/>
    </ligand>
</feature>
<sequence length="667" mass="75595">MSDMIRVTLPDGSAREVARGTTPAEIAAAIGPGLAKAALAAKIDGELRDIMRPLEEDTNLALVTSRDEADALELARHDYAHVLAEAVQTLFPGTQITFGPATSDGFYYDFAPTAEHGPFRDEELPLIEEEMRRIIAADKPLRREVWDRDALIARWKKDGETFKAEWAAELPAGEEISVYWSGDDWMDMCRGPHLASTGKLDPAAFKLTRVSGAYWRGDQKNAQLSRIYGTGWLNRKQLAEHLVRLEEAAKRDHRRLGQEMDLFHLQQEAHGSVFWHPNGFVVWRELEAYMRRAIDAAGYREVKTPQVMDARQWEQSGHWGKYRENMFVIPDEVPNTEDEGPIVSDDAEWMALKPMNCPAHVLIFRQGMKSYRDLPLRLYENGCCHRNEPHGALHGLMRVRQFTQDDAHIFCREDQIVEEVRNFCALADRIYKDFGFTYAIKLALRPEKRFGSDAMWDKSEDELRNAVIEAGLATEQYGWEELPGEGAFYAPKLEWHLTDAIGRTWQVGTIQSDRVLPDRLDASYIGEDGERHRPVMLHRAIFGSYERFIGILIEHFVGRFPTWLAPVQAVVATIVSDADDYAKAATARLVAAGIRTESDLRNEKINYKVREHSLAKVPHLLVVGKREAEEGTVAIRTLGQDGQRIMPLAEAIAMLKTQATPPDLKVR</sequence>
<accession>Q1GVA9</accession>
<reference key="1">
    <citation type="journal article" date="2009" name="Proc. Natl. Acad. Sci. U.S.A.">
        <title>The genomic basis of trophic strategy in marine bacteria.</title>
        <authorList>
            <person name="Lauro F.M."/>
            <person name="McDougald D."/>
            <person name="Thomas T."/>
            <person name="Williams T.J."/>
            <person name="Egan S."/>
            <person name="Rice S."/>
            <person name="DeMaere M.Z."/>
            <person name="Ting L."/>
            <person name="Ertan H."/>
            <person name="Johnson J."/>
            <person name="Ferriera S."/>
            <person name="Lapidus A."/>
            <person name="Anderson I."/>
            <person name="Kyrpides N."/>
            <person name="Munk A.C."/>
            <person name="Detter C."/>
            <person name="Han C.S."/>
            <person name="Brown M.V."/>
            <person name="Robb F.T."/>
            <person name="Kjelleberg S."/>
            <person name="Cavicchioli R."/>
        </authorList>
    </citation>
    <scope>NUCLEOTIDE SEQUENCE [LARGE SCALE GENOMIC DNA]</scope>
    <source>
        <strain>DSM 13593 / LMG 18877 / RB2256</strain>
    </source>
</reference>